<feature type="chain" id="PRO_0000047843" description="Zinc finger protein 2">
    <location>
        <begin position="1"/>
        <end position="150"/>
    </location>
</feature>
<feature type="zinc finger region" description="C2H2-type" evidence="1">
    <location>
        <begin position="52"/>
        <end position="74"/>
    </location>
</feature>
<feature type="region of interest" description="Disordered" evidence="2">
    <location>
        <begin position="120"/>
        <end position="146"/>
    </location>
</feature>
<accession>Q39261</accession>
<name>ZFP2_ARATH</name>
<keyword id="KW-0479">Metal-binding</keyword>
<keyword id="KW-0539">Nucleus</keyword>
<keyword id="KW-1185">Reference proteome</keyword>
<keyword id="KW-0862">Zinc</keyword>
<keyword id="KW-0863">Zinc-finger</keyword>
<gene>
    <name evidence="6" type="primary">ZFP2</name>
    <name type="ordered locus">At5g57520</name>
    <name type="ORF">MUA2.9</name>
</gene>
<sequence>MDYQPNTSLRLSLPSYKNHQLNLELVLEPSSMSSSSSSSTNSSSCLEQPRVFSCNYCQRKFYSSQALGGHQNAHKLERTLAKKSRELFRSSNTVDSDQPYPFSGRFELYGRGYQGFLESGGSRDFSARRVPESGLDQDQEKSHLDLSLRL</sequence>
<protein>
    <recommendedName>
        <fullName evidence="7">Zinc finger protein 2</fullName>
        <shortName evidence="5">AtZFP2</shortName>
    </recommendedName>
</protein>
<organism>
    <name type="scientific">Arabidopsis thaliana</name>
    <name type="common">Mouse-ear cress</name>
    <dbReference type="NCBI Taxonomy" id="3702"/>
    <lineage>
        <taxon>Eukaryota</taxon>
        <taxon>Viridiplantae</taxon>
        <taxon>Streptophyta</taxon>
        <taxon>Embryophyta</taxon>
        <taxon>Tracheophyta</taxon>
        <taxon>Spermatophyta</taxon>
        <taxon>Magnoliopsida</taxon>
        <taxon>eudicotyledons</taxon>
        <taxon>Gunneridae</taxon>
        <taxon>Pentapetalae</taxon>
        <taxon>rosids</taxon>
        <taxon>malvids</taxon>
        <taxon>Brassicales</taxon>
        <taxon>Brassicaceae</taxon>
        <taxon>Camelineae</taxon>
        <taxon>Arabidopsis</taxon>
    </lineage>
</organism>
<proteinExistence type="evidence at protein level"/>
<dbReference type="EMBL" id="L39645">
    <property type="protein sequence ID" value="AAA87298.1"/>
    <property type="molecule type" value="mRNA"/>
</dbReference>
<dbReference type="EMBL" id="AB011482">
    <property type="protein sequence ID" value="BAB08787.1"/>
    <property type="molecule type" value="Genomic_DNA"/>
</dbReference>
<dbReference type="EMBL" id="CP002688">
    <property type="protein sequence ID" value="AED96910.1"/>
    <property type="molecule type" value="Genomic_DNA"/>
</dbReference>
<dbReference type="PIR" id="S55882">
    <property type="entry name" value="S55882"/>
</dbReference>
<dbReference type="RefSeq" id="NP_200560.1">
    <property type="nucleotide sequence ID" value="NM_125133.5"/>
</dbReference>
<dbReference type="SMR" id="Q39261"/>
<dbReference type="BioGRID" id="21100">
    <property type="interactions" value="5"/>
</dbReference>
<dbReference type="IntAct" id="Q39261">
    <property type="interactions" value="5"/>
</dbReference>
<dbReference type="STRING" id="3702.Q39261"/>
<dbReference type="PaxDb" id="3702-AT5G57520.1"/>
<dbReference type="ProteomicsDB" id="232330"/>
<dbReference type="EnsemblPlants" id="AT5G57520.1">
    <property type="protein sequence ID" value="AT5G57520.1"/>
    <property type="gene ID" value="AT5G57520"/>
</dbReference>
<dbReference type="GeneID" id="835856"/>
<dbReference type="Gramene" id="AT5G57520.1">
    <property type="protein sequence ID" value="AT5G57520.1"/>
    <property type="gene ID" value="AT5G57520"/>
</dbReference>
<dbReference type="KEGG" id="ath:AT5G57520"/>
<dbReference type="Araport" id="AT5G57520"/>
<dbReference type="TAIR" id="AT5G57520">
    <property type="gene designation" value="ZFP2"/>
</dbReference>
<dbReference type="eggNOG" id="ENOG502S25C">
    <property type="taxonomic scope" value="Eukaryota"/>
</dbReference>
<dbReference type="HOGENOM" id="CLU_119247_2_2_1"/>
<dbReference type="InParanoid" id="Q39261"/>
<dbReference type="OMA" id="PRVYSCN"/>
<dbReference type="OrthoDB" id="1933825at2759"/>
<dbReference type="PhylomeDB" id="Q39261"/>
<dbReference type="PRO" id="PR:Q39261"/>
<dbReference type="Proteomes" id="UP000006548">
    <property type="component" value="Chromosome 5"/>
</dbReference>
<dbReference type="ExpressionAtlas" id="Q39261">
    <property type="expression patterns" value="baseline and differential"/>
</dbReference>
<dbReference type="GO" id="GO:0005634">
    <property type="term" value="C:nucleus"/>
    <property type="evidence" value="ECO:0000314"/>
    <property type="project" value="UniProtKB"/>
</dbReference>
<dbReference type="GO" id="GO:0003700">
    <property type="term" value="F:DNA-binding transcription factor activity"/>
    <property type="evidence" value="ECO:0000250"/>
    <property type="project" value="TAIR"/>
</dbReference>
<dbReference type="GO" id="GO:0008270">
    <property type="term" value="F:zinc ion binding"/>
    <property type="evidence" value="ECO:0007669"/>
    <property type="project" value="UniProtKB-KW"/>
</dbReference>
<dbReference type="GO" id="GO:0009788">
    <property type="term" value="P:negative regulation of abscisic acid-activated signaling pathway"/>
    <property type="evidence" value="ECO:0007669"/>
    <property type="project" value="InterPro"/>
</dbReference>
<dbReference type="GO" id="GO:0060862">
    <property type="term" value="P:negative regulation of floral organ abscission"/>
    <property type="evidence" value="ECO:0000315"/>
    <property type="project" value="UniProtKB"/>
</dbReference>
<dbReference type="GO" id="GO:0006355">
    <property type="term" value="P:regulation of DNA-templated transcription"/>
    <property type="evidence" value="ECO:0000304"/>
    <property type="project" value="TAIR"/>
</dbReference>
<dbReference type="FunFam" id="3.30.160.60:FF:001366">
    <property type="entry name" value="Zinc finger protein 2"/>
    <property type="match status" value="1"/>
</dbReference>
<dbReference type="Gene3D" id="3.30.160.60">
    <property type="entry name" value="Classic Zinc Finger"/>
    <property type="match status" value="1"/>
</dbReference>
<dbReference type="InterPro" id="IPR044246">
    <property type="entry name" value="ZFP3-like"/>
</dbReference>
<dbReference type="InterPro" id="IPR036236">
    <property type="entry name" value="Znf_C2H2_sf"/>
</dbReference>
<dbReference type="InterPro" id="IPR013087">
    <property type="entry name" value="Znf_C2H2_type"/>
</dbReference>
<dbReference type="PANTHER" id="PTHR47287">
    <property type="entry name" value="C2H2 AND C2HC ZINC FINGERS SUPERFAMILY PROTEIN"/>
    <property type="match status" value="1"/>
</dbReference>
<dbReference type="PANTHER" id="PTHR47287:SF15">
    <property type="entry name" value="ZINC FINGER PROTEIN 3-LIKE"/>
    <property type="match status" value="1"/>
</dbReference>
<dbReference type="SUPFAM" id="SSF57667">
    <property type="entry name" value="beta-beta-alpha zinc fingers"/>
    <property type="match status" value="1"/>
</dbReference>
<dbReference type="PROSITE" id="PS00028">
    <property type="entry name" value="ZINC_FINGER_C2H2_1"/>
    <property type="match status" value="1"/>
</dbReference>
<dbReference type="PROSITE" id="PS50157">
    <property type="entry name" value="ZINC_FINGER_C2H2_2"/>
    <property type="match status" value="1"/>
</dbReference>
<evidence type="ECO:0000255" key="1">
    <source>
        <dbReference type="PROSITE-ProRule" id="PRU00042"/>
    </source>
</evidence>
<evidence type="ECO:0000256" key="2">
    <source>
        <dbReference type="SAM" id="MobiDB-lite"/>
    </source>
</evidence>
<evidence type="ECO:0000269" key="3">
    <source>
    </source>
</evidence>
<evidence type="ECO:0000269" key="4">
    <source>
    </source>
</evidence>
<evidence type="ECO:0000303" key="5">
    <source>
    </source>
</evidence>
<evidence type="ECO:0000303" key="6">
    <source>
    </source>
</evidence>
<evidence type="ECO:0000305" key="7"/>
<comment type="function">
    <text evidence="3">Probable transcription factor involved in the regulation of floral organ abscission. Participates in processes that directly or indirectly influence shedding of floral organs.</text>
</comment>
<comment type="subunit">
    <text evidence="4">Interacts with DOF4.7.</text>
</comment>
<comment type="subcellular location">
    <subcellularLocation>
        <location evidence="4">Nucleus</location>
    </subcellularLocation>
</comment>
<comment type="tissue specificity">
    <text evidence="3">Highly expressed at in the abscission zone (AZ) of petals, stamens, sepals and siliques. Expressed at lower levels in stamens, carpels, cotyledons, major veins of rosette leaves, trichomes of inflorescence leaves and stems.</text>
</comment>
<comment type="miscellaneous">
    <text evidence="3">Plants over-expressing ZFP2 fail in the abscission of floral organs (sepals, petals and stamens) after anthesis.</text>
</comment>
<reference key="1">
    <citation type="journal article" date="1995" name="Plant Mol. Biol.">
        <title>Characterization of a family of Arabidopsis zinc finger protein cDNAs.</title>
        <authorList>
            <person name="Tague B.W."/>
            <person name="Goodman H.M."/>
        </authorList>
    </citation>
    <scope>NUCLEOTIDE SEQUENCE [MRNA]</scope>
    <source>
        <strain>cv. Landsberg erecta</strain>
        <tissue>Silique</tissue>
    </source>
</reference>
<reference key="2">
    <citation type="journal article" date="1998" name="DNA Res.">
        <title>Structural analysis of Arabidopsis thaliana chromosome 5. V. Sequence features of the regions of 1,381,565 bp covered by twenty one physically assigned P1 and TAC clones.</title>
        <authorList>
            <person name="Kaneko T."/>
            <person name="Kotani H."/>
            <person name="Nakamura Y."/>
            <person name="Sato S."/>
            <person name="Asamizu E."/>
            <person name="Miyajima N."/>
            <person name="Tabata S."/>
        </authorList>
    </citation>
    <scope>NUCLEOTIDE SEQUENCE [LARGE SCALE GENOMIC DNA]</scope>
    <source>
        <strain>cv. Columbia</strain>
    </source>
</reference>
<reference key="3">
    <citation type="journal article" date="2017" name="Plant J.">
        <title>Araport11: a complete reannotation of the Arabidopsis thaliana reference genome.</title>
        <authorList>
            <person name="Cheng C.Y."/>
            <person name="Krishnakumar V."/>
            <person name="Chan A.P."/>
            <person name="Thibaud-Nissen F."/>
            <person name="Schobel S."/>
            <person name="Town C.D."/>
        </authorList>
    </citation>
    <scope>GENOME REANNOTATION</scope>
    <source>
        <strain>cv. Columbia</strain>
    </source>
</reference>
<reference key="4">
    <citation type="journal article" date="2008" name="Plant Physiol.">
        <title>Stamen abscission zone transcriptome profiling reveals new candidates for abscission control: enhanced retention of floral organs in transgenic plants overexpressing Arabidopsis ZINC FINGER PROTEIN2.</title>
        <authorList>
            <person name="Cai S."/>
            <person name="Lashbrook C.C."/>
        </authorList>
    </citation>
    <scope>FUNCTION</scope>
    <scope>TISSUE SPECIFICITY</scope>
</reference>
<reference key="5">
    <citation type="journal article" date="2010" name="Plant Physiol.">
        <title>Overexpression of AtDOF4.7, an Arabidopsis DOF family transcription factor, induces floral organ abscission deficiency in Arabidopsis.</title>
        <authorList>
            <person name="Wei P.C."/>
            <person name="Tan F."/>
            <person name="Gao X.Q."/>
            <person name="Zhang X.Q."/>
            <person name="Wang G.Q."/>
            <person name="Xu H."/>
            <person name="Li L.J."/>
            <person name="Chen J."/>
            <person name="Wang X.C."/>
        </authorList>
    </citation>
    <scope>INTERACTION WITH DOF4.7</scope>
    <scope>SUBCELLULAR LOCATION</scope>
</reference>